<dbReference type="EC" id="2.1.1.174" evidence="1"/>
<dbReference type="EMBL" id="CP000510">
    <property type="protein sequence ID" value="ABM04037.1"/>
    <property type="molecule type" value="Genomic_DNA"/>
</dbReference>
<dbReference type="RefSeq" id="WP_011770597.1">
    <property type="nucleotide sequence ID" value="NC_008709.1"/>
</dbReference>
<dbReference type="SMR" id="A1SX22"/>
<dbReference type="STRING" id="357804.Ping_2296"/>
<dbReference type="KEGG" id="pin:Ping_2296"/>
<dbReference type="eggNOG" id="COG2813">
    <property type="taxonomic scope" value="Bacteria"/>
</dbReference>
<dbReference type="HOGENOM" id="CLU_040288_4_0_6"/>
<dbReference type="OrthoDB" id="29650at2"/>
<dbReference type="Proteomes" id="UP000000639">
    <property type="component" value="Chromosome"/>
</dbReference>
<dbReference type="GO" id="GO:0005737">
    <property type="term" value="C:cytoplasm"/>
    <property type="evidence" value="ECO:0007669"/>
    <property type="project" value="UniProtKB-SubCell"/>
</dbReference>
<dbReference type="GO" id="GO:0052916">
    <property type="term" value="F:23S rRNA (guanine(1835)-N(2))-methyltransferase activity"/>
    <property type="evidence" value="ECO:0007669"/>
    <property type="project" value="UniProtKB-EC"/>
</dbReference>
<dbReference type="GO" id="GO:0003676">
    <property type="term" value="F:nucleic acid binding"/>
    <property type="evidence" value="ECO:0007669"/>
    <property type="project" value="InterPro"/>
</dbReference>
<dbReference type="CDD" id="cd02440">
    <property type="entry name" value="AdoMet_MTases"/>
    <property type="match status" value="1"/>
</dbReference>
<dbReference type="Gene3D" id="3.40.50.150">
    <property type="entry name" value="Vaccinia Virus protein VP39"/>
    <property type="match status" value="2"/>
</dbReference>
<dbReference type="HAMAP" id="MF_01859">
    <property type="entry name" value="23SrRNA_methyltr_G"/>
    <property type="match status" value="1"/>
</dbReference>
<dbReference type="InterPro" id="IPR002052">
    <property type="entry name" value="DNA_methylase_N6_adenine_CS"/>
</dbReference>
<dbReference type="InterPro" id="IPR017237">
    <property type="entry name" value="rRNA_m2G-MeTrfase_RlmG"/>
</dbReference>
<dbReference type="InterPro" id="IPR046977">
    <property type="entry name" value="RsmC/RlmG"/>
</dbReference>
<dbReference type="InterPro" id="IPR029063">
    <property type="entry name" value="SAM-dependent_MTases_sf"/>
</dbReference>
<dbReference type="InterPro" id="IPR007848">
    <property type="entry name" value="Small_mtfrase_dom"/>
</dbReference>
<dbReference type="PANTHER" id="PTHR47816:SF5">
    <property type="entry name" value="RIBOSOMAL RNA LARGE SUBUNIT METHYLTRANSFERASE G"/>
    <property type="match status" value="1"/>
</dbReference>
<dbReference type="PANTHER" id="PTHR47816">
    <property type="entry name" value="RIBOSOMAL RNA SMALL SUBUNIT METHYLTRANSFERASE C"/>
    <property type="match status" value="1"/>
</dbReference>
<dbReference type="Pfam" id="PF05175">
    <property type="entry name" value="MTS"/>
    <property type="match status" value="1"/>
</dbReference>
<dbReference type="PIRSF" id="PIRSF037565">
    <property type="entry name" value="RRNA_m2G_Mtase_RsmD_prd"/>
    <property type="match status" value="1"/>
</dbReference>
<dbReference type="SUPFAM" id="SSF53335">
    <property type="entry name" value="S-adenosyl-L-methionine-dependent methyltransferases"/>
    <property type="match status" value="1"/>
</dbReference>
<organism>
    <name type="scientific">Psychromonas ingrahamii (strain DSM 17664 / CCUG 51855 / 37)</name>
    <dbReference type="NCBI Taxonomy" id="357804"/>
    <lineage>
        <taxon>Bacteria</taxon>
        <taxon>Pseudomonadati</taxon>
        <taxon>Pseudomonadota</taxon>
        <taxon>Gammaproteobacteria</taxon>
        <taxon>Alteromonadales</taxon>
        <taxon>Psychromonadaceae</taxon>
        <taxon>Psychromonas</taxon>
    </lineage>
</organism>
<proteinExistence type="inferred from homology"/>
<sequence length="382" mass="43652">MNEALNIADQTLVLHRHPRIKNETLQAWDSADEYLINYFSENELQKQLNENEQILLVNDSFGALTCYLQAFQRTVVSDSYLSINSIKLNMQRNRCPEENLLLQDSLQQFPENVKIVLIKIPKTLSYLEEMLQKLHAVITPETIVVAAGKVNMIHNSTLDLFEKYIGTTKTSLAKKKSRLIFSLPIIKEVPEKEIAITWEIEKLDWKIHNHANVFSRNHLDIGGRFLMDNLPKGDFSKVVDLGCGNGIIGMAASAAYPKAQITFIDESYMSIDSARINMQKNLPEEQAENARFVVNNGLVGFKPRSYDLILCNPPFHQQQTITDQIAWSMFNDAHFCLVDNGELVIVGNHHLNYQDKLERIFGNCEIVSQNKKFVILRAVKMD</sequence>
<reference key="1">
    <citation type="journal article" date="2008" name="BMC Genomics">
        <title>Genomics of an extreme psychrophile, Psychromonas ingrahamii.</title>
        <authorList>
            <person name="Riley M."/>
            <person name="Staley J.T."/>
            <person name="Danchin A."/>
            <person name="Wang T.Z."/>
            <person name="Brettin T.S."/>
            <person name="Hauser L.J."/>
            <person name="Land M.L."/>
            <person name="Thompson L.S."/>
        </authorList>
    </citation>
    <scope>NUCLEOTIDE SEQUENCE [LARGE SCALE GENOMIC DNA]</scope>
    <source>
        <strain>DSM 17664 / CCUG 51855 / 37</strain>
    </source>
</reference>
<protein>
    <recommendedName>
        <fullName evidence="1">Ribosomal RNA large subunit methyltransferase G</fullName>
        <ecNumber evidence="1">2.1.1.174</ecNumber>
    </recommendedName>
    <alternativeName>
        <fullName evidence="1">23S rRNA m2G1835 methyltransferase</fullName>
    </alternativeName>
    <alternativeName>
        <fullName evidence="1">rRNA (guanine-N(2)-)-methyltransferase RlmG</fullName>
    </alternativeName>
</protein>
<accession>A1SX22</accession>
<name>RLMG_PSYIN</name>
<feature type="chain" id="PRO_0000366488" description="Ribosomal RNA large subunit methyltransferase G">
    <location>
        <begin position="1"/>
        <end position="382"/>
    </location>
</feature>
<keyword id="KW-0963">Cytoplasm</keyword>
<keyword id="KW-0489">Methyltransferase</keyword>
<keyword id="KW-1185">Reference proteome</keyword>
<keyword id="KW-0698">rRNA processing</keyword>
<keyword id="KW-0949">S-adenosyl-L-methionine</keyword>
<keyword id="KW-0808">Transferase</keyword>
<comment type="function">
    <text evidence="1">Specifically methylates the guanine in position 1835 (m2G1835) of 23S rRNA.</text>
</comment>
<comment type="catalytic activity">
    <reaction evidence="1">
        <text>guanosine(1835) in 23S rRNA + S-adenosyl-L-methionine = N(2)-methylguanosine(1835) in 23S rRNA + S-adenosyl-L-homocysteine + H(+)</text>
        <dbReference type="Rhea" id="RHEA:42744"/>
        <dbReference type="Rhea" id="RHEA-COMP:10217"/>
        <dbReference type="Rhea" id="RHEA-COMP:10218"/>
        <dbReference type="ChEBI" id="CHEBI:15378"/>
        <dbReference type="ChEBI" id="CHEBI:57856"/>
        <dbReference type="ChEBI" id="CHEBI:59789"/>
        <dbReference type="ChEBI" id="CHEBI:74269"/>
        <dbReference type="ChEBI" id="CHEBI:74481"/>
        <dbReference type="EC" id="2.1.1.174"/>
    </reaction>
</comment>
<comment type="subcellular location">
    <subcellularLocation>
        <location evidence="1">Cytoplasm</location>
    </subcellularLocation>
</comment>
<comment type="similarity">
    <text evidence="1">Belongs to the methyltransferase superfamily. RlmG family.</text>
</comment>
<evidence type="ECO:0000255" key="1">
    <source>
        <dbReference type="HAMAP-Rule" id="MF_01859"/>
    </source>
</evidence>
<gene>
    <name evidence="1" type="primary">rlmG</name>
    <name type="ordered locus">Ping_2296</name>
</gene>